<feature type="chain" id="PRO_0000224152" description="Chromosome-anchoring protein RacA">
    <location>
        <begin position="1"/>
        <end position="180"/>
    </location>
</feature>
<feature type="DNA-binding region" description="H-T-H motif" evidence="1">
    <location>
        <begin position="5"/>
        <end position="25"/>
    </location>
</feature>
<feature type="coiled-coil region" evidence="1">
    <location>
        <begin position="67"/>
        <end position="151"/>
    </location>
</feature>
<protein>
    <recommendedName>
        <fullName evidence="1">Chromosome-anchoring protein RacA</fullName>
    </recommendedName>
</protein>
<gene>
    <name evidence="1" type="primary">racA</name>
    <name type="ordered locus">BC_2239</name>
</gene>
<evidence type="ECO:0000255" key="1">
    <source>
        <dbReference type="HAMAP-Rule" id="MF_01170"/>
    </source>
</evidence>
<comment type="function">
    <text evidence="1">Required for the formation of axial filaments and for anchoring the origin regions at the cell poles in sporulating cells, thus ensuring proper chromosome segregation in the prespore. Binds in a dispersed manner throughout the chromosome but preferentially to sites clustered in the origin portion of the chromosome, causing condensation of the chromosome and its remodeling into an elongated, anchored structure.</text>
</comment>
<comment type="subcellular location">
    <subcellularLocation>
        <location evidence="1">Cytoplasm</location>
    </subcellularLocation>
    <text evidence="1">Localizes to cell poles and nucleoid.</text>
</comment>
<comment type="similarity">
    <text evidence="1">Belongs to the RacA family.</text>
</comment>
<accession>Q81DW0</accession>
<name>RACA_BACCR</name>
<dbReference type="EMBL" id="AE016877">
    <property type="protein sequence ID" value="AAP09204.1"/>
    <property type="molecule type" value="Genomic_DNA"/>
</dbReference>
<dbReference type="RefSeq" id="NP_832003.1">
    <property type="nucleotide sequence ID" value="NC_004722.1"/>
</dbReference>
<dbReference type="RefSeq" id="WP_000456023.1">
    <property type="nucleotide sequence ID" value="NZ_CP138336.1"/>
</dbReference>
<dbReference type="SMR" id="Q81DW0"/>
<dbReference type="STRING" id="226900.BC_2239"/>
<dbReference type="KEGG" id="bce:BC2239"/>
<dbReference type="PATRIC" id="fig|226900.8.peg.2261"/>
<dbReference type="HOGENOM" id="CLU_111022_0_0_9"/>
<dbReference type="OrthoDB" id="2991292at2"/>
<dbReference type="Proteomes" id="UP000001417">
    <property type="component" value="Chromosome"/>
</dbReference>
<dbReference type="GO" id="GO:0005737">
    <property type="term" value="C:cytoplasm"/>
    <property type="evidence" value="ECO:0007669"/>
    <property type="project" value="UniProtKB-SubCell"/>
</dbReference>
<dbReference type="GO" id="GO:0003690">
    <property type="term" value="F:double-stranded DNA binding"/>
    <property type="evidence" value="ECO:0007669"/>
    <property type="project" value="UniProtKB-UniRule"/>
</dbReference>
<dbReference type="GO" id="GO:0008356">
    <property type="term" value="P:asymmetric cell division"/>
    <property type="evidence" value="ECO:0007669"/>
    <property type="project" value="UniProtKB-UniRule"/>
</dbReference>
<dbReference type="GO" id="GO:0030261">
    <property type="term" value="P:chromosome condensation"/>
    <property type="evidence" value="ECO:0007669"/>
    <property type="project" value="UniProtKB-UniRule"/>
</dbReference>
<dbReference type="GO" id="GO:0007059">
    <property type="term" value="P:chromosome segregation"/>
    <property type="evidence" value="ECO:0007669"/>
    <property type="project" value="UniProtKB-UniRule"/>
</dbReference>
<dbReference type="GO" id="GO:0030435">
    <property type="term" value="P:sporulation resulting in formation of a cellular spore"/>
    <property type="evidence" value="ECO:0007669"/>
    <property type="project" value="UniProtKB-UniRule"/>
</dbReference>
<dbReference type="Gene3D" id="1.10.1660.10">
    <property type="match status" value="1"/>
</dbReference>
<dbReference type="HAMAP" id="MF_01170">
    <property type="entry name" value="RacA"/>
    <property type="match status" value="1"/>
</dbReference>
<dbReference type="InterPro" id="IPR023522">
    <property type="entry name" value="Chrosome_anchoring_RacA"/>
</dbReference>
<dbReference type="NCBIfam" id="NF009646">
    <property type="entry name" value="PRK13182.1-1"/>
    <property type="match status" value="1"/>
</dbReference>
<dbReference type="SUPFAM" id="SSF58064">
    <property type="entry name" value="Influenza hemagglutinin (stalk)"/>
    <property type="match status" value="1"/>
</dbReference>
<organism>
    <name type="scientific">Bacillus cereus (strain ATCC 14579 / DSM 31 / CCUG 7414 / JCM 2152 / NBRC 15305 / NCIMB 9373 / NCTC 2599 / NRRL B-3711)</name>
    <dbReference type="NCBI Taxonomy" id="226900"/>
    <lineage>
        <taxon>Bacteria</taxon>
        <taxon>Bacillati</taxon>
        <taxon>Bacillota</taxon>
        <taxon>Bacilli</taxon>
        <taxon>Bacillales</taxon>
        <taxon>Bacillaceae</taxon>
        <taxon>Bacillus</taxon>
        <taxon>Bacillus cereus group</taxon>
    </lineage>
</organism>
<reference key="1">
    <citation type="journal article" date="2003" name="Nature">
        <title>Genome sequence of Bacillus cereus and comparative analysis with Bacillus anthracis.</title>
        <authorList>
            <person name="Ivanova N."/>
            <person name="Sorokin A."/>
            <person name="Anderson I."/>
            <person name="Galleron N."/>
            <person name="Candelon B."/>
            <person name="Kapatral V."/>
            <person name="Bhattacharyya A."/>
            <person name="Reznik G."/>
            <person name="Mikhailova N."/>
            <person name="Lapidus A."/>
            <person name="Chu L."/>
            <person name="Mazur M."/>
            <person name="Goltsman E."/>
            <person name="Larsen N."/>
            <person name="D'Souza M."/>
            <person name="Walunas T."/>
            <person name="Grechkin Y."/>
            <person name="Pusch G."/>
            <person name="Haselkorn R."/>
            <person name="Fonstein M."/>
            <person name="Ehrlich S.D."/>
            <person name="Overbeek R."/>
            <person name="Kyrpides N.C."/>
        </authorList>
    </citation>
    <scope>NUCLEOTIDE SEQUENCE [LARGE SCALE GENOMIC DNA]</scope>
    <source>
        <strain>ATCC 14579 / DSM 31 / CCUG 7414 / JCM 2152 / NBRC 15305 / NCIMB 9373 / NCTC 2599 / NRRL B-3711</strain>
    </source>
</reference>
<keyword id="KW-0131">Cell cycle</keyword>
<keyword id="KW-0132">Cell division</keyword>
<keyword id="KW-0159">Chromosome partition</keyword>
<keyword id="KW-0175">Coiled coil</keyword>
<keyword id="KW-0963">Cytoplasm</keyword>
<keyword id="KW-0238">DNA-binding</keyword>
<keyword id="KW-1185">Reference proteome</keyword>
<keyword id="KW-0749">Sporulation</keyword>
<proteinExistence type="inferred from homology"/>
<sequence>MEYKTPFIAKKLGVSPKAVVRIAQQLNLTIEKNKYGHFIFTQEDVDQMLEHHRFQIEQSQNSQSTQKASSNEVEELKTQVNTIVQNISSNDFEQLANQLNTITRRLDRMEEQMQDKANDVVTYQLLQHRREMEEMLERIQKLEAALTKEEPIYITPDSKPTYEREKKPKRRKMIFSIFGL</sequence>